<keyword id="KW-0046">Antibiotic resistance</keyword>
<keyword id="KW-0997">Cell inner membrane</keyword>
<keyword id="KW-1003">Cell membrane</keyword>
<keyword id="KW-0328">Glycosyltransferase</keyword>
<keyword id="KW-0441">Lipid A biosynthesis</keyword>
<keyword id="KW-0444">Lipid biosynthesis</keyword>
<keyword id="KW-0443">Lipid metabolism</keyword>
<keyword id="KW-0448">Lipopolysaccharide biosynthesis</keyword>
<keyword id="KW-0472">Membrane</keyword>
<keyword id="KW-1185">Reference proteome</keyword>
<keyword id="KW-0808">Transferase</keyword>
<keyword id="KW-0812">Transmembrane</keyword>
<keyword id="KW-1133">Transmembrane helix</keyword>
<protein>
    <recommendedName>
        <fullName evidence="1">Undecaprenyl-phosphate 4-deoxy-4-formamido-L-arabinose transferase</fullName>
        <ecNumber evidence="1">2.4.2.53</ecNumber>
    </recommendedName>
    <alternativeName>
        <fullName evidence="1">Undecaprenyl-phosphate Ara4FN transferase</fullName>
        <shortName evidence="1">Ara4FN transferase</shortName>
    </alternativeName>
</protein>
<comment type="function">
    <text evidence="1">Catalyzes the transfer of 4-deoxy-4-formamido-L-arabinose from UDP to undecaprenyl phosphate. The modified arabinose is attached to lipid A and is required for resistance to polymyxin and cationic antimicrobial peptides.</text>
</comment>
<comment type="catalytic activity">
    <reaction evidence="1">
        <text>UDP-4-deoxy-4-formamido-beta-L-arabinose + di-trans,octa-cis-undecaprenyl phosphate = 4-deoxy-4-formamido-alpha-L-arabinopyranosyl di-trans,octa-cis-undecaprenyl phosphate + UDP</text>
        <dbReference type="Rhea" id="RHEA:27722"/>
        <dbReference type="ChEBI" id="CHEBI:58223"/>
        <dbReference type="ChEBI" id="CHEBI:58709"/>
        <dbReference type="ChEBI" id="CHEBI:58909"/>
        <dbReference type="ChEBI" id="CHEBI:60392"/>
        <dbReference type="EC" id="2.4.2.53"/>
    </reaction>
</comment>
<comment type="pathway">
    <text evidence="1">Glycolipid biosynthesis; 4-amino-4-deoxy-alpha-L-arabinose undecaprenyl phosphate biosynthesis; 4-amino-4-deoxy-alpha-L-arabinose undecaprenyl phosphate from UDP-4-deoxy-4-formamido-beta-L-arabinose and undecaprenyl phosphate: step 1/2.</text>
</comment>
<comment type="pathway">
    <text evidence="1">Bacterial outer membrane biogenesis; lipopolysaccharide biosynthesis.</text>
</comment>
<comment type="subcellular location">
    <subcellularLocation>
        <location evidence="1">Cell inner membrane</location>
        <topology evidence="1">Multi-pass membrane protein</topology>
    </subcellularLocation>
</comment>
<comment type="similarity">
    <text evidence="1">Belongs to the glycosyltransferase 2 family.</text>
</comment>
<organism>
    <name type="scientific">Escherichia coli O6:H1 (strain CFT073 / ATCC 700928 / UPEC)</name>
    <dbReference type="NCBI Taxonomy" id="199310"/>
    <lineage>
        <taxon>Bacteria</taxon>
        <taxon>Pseudomonadati</taxon>
        <taxon>Pseudomonadota</taxon>
        <taxon>Gammaproteobacteria</taxon>
        <taxon>Enterobacterales</taxon>
        <taxon>Enterobacteriaceae</taxon>
        <taxon>Escherichia</taxon>
    </lineage>
</organism>
<evidence type="ECO:0000255" key="1">
    <source>
        <dbReference type="HAMAP-Rule" id="MF_01164"/>
    </source>
</evidence>
<feature type="chain" id="PRO_0000059197" description="Undecaprenyl-phosphate 4-deoxy-4-formamido-L-arabinose transferase">
    <location>
        <begin position="1"/>
        <end position="322"/>
    </location>
</feature>
<feature type="topological domain" description="Cytoplasmic" evidence="1">
    <location>
        <begin position="1"/>
        <end position="235"/>
    </location>
</feature>
<feature type="transmembrane region" description="Helical" evidence="1">
    <location>
        <begin position="236"/>
        <end position="256"/>
    </location>
</feature>
<feature type="topological domain" description="Periplasmic" evidence="1">
    <location>
        <begin position="257"/>
        <end position="269"/>
    </location>
</feature>
<feature type="transmembrane region" description="Helical" evidence="1">
    <location>
        <begin position="270"/>
        <end position="290"/>
    </location>
</feature>
<feature type="topological domain" description="Cytoplasmic" evidence="1">
    <location>
        <begin position="291"/>
        <end position="322"/>
    </location>
</feature>
<reference key="1">
    <citation type="journal article" date="2002" name="Proc. Natl. Acad. Sci. U.S.A.">
        <title>Extensive mosaic structure revealed by the complete genome sequence of uropathogenic Escherichia coli.</title>
        <authorList>
            <person name="Welch R.A."/>
            <person name="Burland V."/>
            <person name="Plunkett G. III"/>
            <person name="Redford P."/>
            <person name="Roesch P."/>
            <person name="Rasko D."/>
            <person name="Buckles E.L."/>
            <person name="Liou S.-R."/>
            <person name="Boutin A."/>
            <person name="Hackett J."/>
            <person name="Stroud D."/>
            <person name="Mayhew G.F."/>
            <person name="Rose D.J."/>
            <person name="Zhou S."/>
            <person name="Schwartz D.C."/>
            <person name="Perna N.T."/>
            <person name="Mobley H.L.T."/>
            <person name="Donnenberg M.S."/>
            <person name="Blattner F.R."/>
        </authorList>
    </citation>
    <scope>NUCLEOTIDE SEQUENCE [LARGE SCALE GENOMIC DNA]</scope>
    <source>
        <strain>CFT073 / ATCC 700928 / UPEC</strain>
    </source>
</reference>
<gene>
    <name evidence="1" type="primary">arnC</name>
    <name type="ordered locus">c2796</name>
</gene>
<name>ARNC_ECOL6</name>
<accession>Q8FFM2</accession>
<proteinExistence type="inferred from homology"/>
<sequence>MFEIHPVKKVSVVIPVYNEQESLPELIRRTTAACESLGKEYEILLIDDGSSDNSAHMLVEASQAEGSHIVSILLNRNYGQHSAIMAGFSHVTGDLIITLDADLQNPPEEIPRLVAKADEGYDVVGTVRQNRQDSWFRKTASKMINRLIQRTTGKAMGDYGCMLRAYRRHIVDAMLHCHERSTFIPILANIFARRAIEIPVHHAEREFGESKYSFMRLINLMYDLVTCLTTTPLRMLSLLGSIIAIGGFSIAVLLVILRLTFGPQWAAEGVFMLFAVLFTFIGAQFIGMGLLGEYIGRIYTDVRARPRYFVQQVIRPSSKENE</sequence>
<dbReference type="EC" id="2.4.2.53" evidence="1"/>
<dbReference type="EMBL" id="AE014075">
    <property type="protein sequence ID" value="AAN81250.1"/>
    <property type="molecule type" value="Genomic_DNA"/>
</dbReference>
<dbReference type="RefSeq" id="WP_000461633.1">
    <property type="nucleotide sequence ID" value="NZ_CP051263.1"/>
</dbReference>
<dbReference type="SMR" id="Q8FFM2"/>
<dbReference type="STRING" id="199310.c2796"/>
<dbReference type="CAZy" id="GT2">
    <property type="family name" value="Glycosyltransferase Family 2"/>
</dbReference>
<dbReference type="KEGG" id="ecc:c2796"/>
<dbReference type="eggNOG" id="COG0463">
    <property type="taxonomic scope" value="Bacteria"/>
</dbReference>
<dbReference type="HOGENOM" id="CLU_033536_0_0_6"/>
<dbReference type="BioCyc" id="ECOL199310:C2796-MONOMER"/>
<dbReference type="UniPathway" id="UPA00030"/>
<dbReference type="UniPathway" id="UPA00036">
    <property type="reaction ID" value="UER00495"/>
</dbReference>
<dbReference type="Proteomes" id="UP000001410">
    <property type="component" value="Chromosome"/>
</dbReference>
<dbReference type="GO" id="GO:0005886">
    <property type="term" value="C:plasma membrane"/>
    <property type="evidence" value="ECO:0007669"/>
    <property type="project" value="UniProtKB-SubCell"/>
</dbReference>
<dbReference type="GO" id="GO:0016780">
    <property type="term" value="F:phosphotransferase activity, for other substituted phosphate groups"/>
    <property type="evidence" value="ECO:0007669"/>
    <property type="project" value="UniProtKB-UniRule"/>
</dbReference>
<dbReference type="GO" id="GO:0099621">
    <property type="term" value="F:undecaprenyl-phosphate 4-deoxy-4-formamido-L-arabinose transferase activity"/>
    <property type="evidence" value="ECO:0007669"/>
    <property type="project" value="UniProtKB-EC"/>
</dbReference>
<dbReference type="GO" id="GO:0036108">
    <property type="term" value="P:4-amino-4-deoxy-alpha-L-arabinopyranosyl undecaprenyl phosphate biosynthetic process"/>
    <property type="evidence" value="ECO:0007669"/>
    <property type="project" value="UniProtKB-UniRule"/>
</dbReference>
<dbReference type="GO" id="GO:0009245">
    <property type="term" value="P:lipid A biosynthetic process"/>
    <property type="evidence" value="ECO:0007669"/>
    <property type="project" value="UniProtKB-UniRule"/>
</dbReference>
<dbReference type="GO" id="GO:0009103">
    <property type="term" value="P:lipopolysaccharide biosynthetic process"/>
    <property type="evidence" value="ECO:0007669"/>
    <property type="project" value="UniProtKB-UniRule"/>
</dbReference>
<dbReference type="GO" id="GO:0046677">
    <property type="term" value="P:response to antibiotic"/>
    <property type="evidence" value="ECO:0007669"/>
    <property type="project" value="UniProtKB-KW"/>
</dbReference>
<dbReference type="CDD" id="cd04187">
    <property type="entry name" value="DPM1_like_bac"/>
    <property type="match status" value="1"/>
</dbReference>
<dbReference type="FunFam" id="3.90.550.10:FF:000019">
    <property type="entry name" value="Undecaprenyl-phosphate 4-deoxy-4-formamido-L-arabinose transferase"/>
    <property type="match status" value="1"/>
</dbReference>
<dbReference type="Gene3D" id="3.90.550.10">
    <property type="entry name" value="Spore Coat Polysaccharide Biosynthesis Protein SpsA, Chain A"/>
    <property type="match status" value="1"/>
</dbReference>
<dbReference type="HAMAP" id="MF_01164">
    <property type="entry name" value="ArnC_transfer"/>
    <property type="match status" value="1"/>
</dbReference>
<dbReference type="InterPro" id="IPR022857">
    <property type="entry name" value="ArnC_tfrase"/>
</dbReference>
<dbReference type="InterPro" id="IPR001173">
    <property type="entry name" value="Glyco_trans_2-like"/>
</dbReference>
<dbReference type="InterPro" id="IPR050256">
    <property type="entry name" value="Glycosyltransferase_2"/>
</dbReference>
<dbReference type="InterPro" id="IPR029044">
    <property type="entry name" value="Nucleotide-diphossugar_trans"/>
</dbReference>
<dbReference type="NCBIfam" id="NF007986">
    <property type="entry name" value="PRK10714.1"/>
    <property type="match status" value="1"/>
</dbReference>
<dbReference type="PANTHER" id="PTHR48090:SF3">
    <property type="entry name" value="UNDECAPRENYL-PHOSPHATE 4-DEOXY-4-FORMAMIDO-L-ARABINOSE TRANSFERASE"/>
    <property type="match status" value="1"/>
</dbReference>
<dbReference type="PANTHER" id="PTHR48090">
    <property type="entry name" value="UNDECAPRENYL-PHOSPHATE 4-DEOXY-4-FORMAMIDO-L-ARABINOSE TRANSFERASE-RELATED"/>
    <property type="match status" value="1"/>
</dbReference>
<dbReference type="Pfam" id="PF00535">
    <property type="entry name" value="Glycos_transf_2"/>
    <property type="match status" value="1"/>
</dbReference>
<dbReference type="SUPFAM" id="SSF53448">
    <property type="entry name" value="Nucleotide-diphospho-sugar transferases"/>
    <property type="match status" value="1"/>
</dbReference>